<comment type="function">
    <text evidence="1">Part of the ABC transporter complex UgpBAEC involved in sn-glycerol-3-phosphate (G3P) import. Probably responsible for the translocation of the substrate across the membrane.</text>
</comment>
<comment type="subunit">
    <text evidence="1">The complex is composed of two ATP-binding proteins (UgpC), two transmembrane proteins (UgpA and UgpE) and a solute-binding protein (UgpB).</text>
</comment>
<comment type="subcellular location">
    <subcellularLocation>
        <location evidence="1">Cell inner membrane</location>
        <topology evidence="2">Multi-pass membrane protein</topology>
    </subcellularLocation>
</comment>
<comment type="similarity">
    <text evidence="4">Belongs to the binding-protein-dependent transport system permease family.</text>
</comment>
<reference key="1">
    <citation type="journal article" date="2005" name="J. Bacteriol.">
        <title>Completion of the genome sequence of Brucella abortus and comparison to the highly similar genomes of Brucella melitensis and Brucella suis.</title>
        <authorList>
            <person name="Halling S.M."/>
            <person name="Peterson-Burch B.D."/>
            <person name="Bricker B.J."/>
            <person name="Zuerner R.L."/>
            <person name="Qing Z."/>
            <person name="Li L.-L."/>
            <person name="Kapur V."/>
            <person name="Alt D.P."/>
            <person name="Olsen S.C."/>
        </authorList>
    </citation>
    <scope>NUCLEOTIDE SEQUENCE [LARGE SCALE GENOMIC DNA]</scope>
    <source>
        <strain>9-941</strain>
    </source>
</reference>
<dbReference type="EMBL" id="AE017224">
    <property type="protein sequence ID" value="AAX75987.1"/>
    <property type="molecule type" value="Genomic_DNA"/>
</dbReference>
<dbReference type="RefSeq" id="WP_002965981.1">
    <property type="nucleotide sequence ID" value="NC_006933.1"/>
</dbReference>
<dbReference type="SMR" id="Q578E7"/>
<dbReference type="EnsemblBacteria" id="AAX75987">
    <property type="protein sequence ID" value="AAX75987"/>
    <property type="gene ID" value="BruAb2_0570"/>
</dbReference>
<dbReference type="GeneID" id="93015521"/>
<dbReference type="KEGG" id="bmb:BruAb2_0570"/>
<dbReference type="HOGENOM" id="CLU_016047_0_2_5"/>
<dbReference type="PRO" id="PR:Q578E7"/>
<dbReference type="Proteomes" id="UP000000540">
    <property type="component" value="Chromosome II"/>
</dbReference>
<dbReference type="GO" id="GO:0005886">
    <property type="term" value="C:plasma membrane"/>
    <property type="evidence" value="ECO:0007669"/>
    <property type="project" value="UniProtKB-SubCell"/>
</dbReference>
<dbReference type="GO" id="GO:0055085">
    <property type="term" value="P:transmembrane transport"/>
    <property type="evidence" value="ECO:0007669"/>
    <property type="project" value="InterPro"/>
</dbReference>
<dbReference type="CDD" id="cd06261">
    <property type="entry name" value="TM_PBP2"/>
    <property type="match status" value="1"/>
</dbReference>
<dbReference type="Gene3D" id="1.10.3720.10">
    <property type="entry name" value="MetI-like"/>
    <property type="match status" value="1"/>
</dbReference>
<dbReference type="InterPro" id="IPR000515">
    <property type="entry name" value="MetI-like"/>
</dbReference>
<dbReference type="InterPro" id="IPR035906">
    <property type="entry name" value="MetI-like_sf"/>
</dbReference>
<dbReference type="InterPro" id="IPR050809">
    <property type="entry name" value="UgpAE/MalFG_permease"/>
</dbReference>
<dbReference type="NCBIfam" id="NF007852">
    <property type="entry name" value="PRK10561.1"/>
    <property type="match status" value="1"/>
</dbReference>
<dbReference type="PANTHER" id="PTHR43227">
    <property type="entry name" value="BLL4140 PROTEIN"/>
    <property type="match status" value="1"/>
</dbReference>
<dbReference type="PANTHER" id="PTHR43227:SF9">
    <property type="entry name" value="SN-GLYCEROL-3-PHOSPHATE TRANSPORT SYSTEM PERMEASE PROTEIN UGPA"/>
    <property type="match status" value="1"/>
</dbReference>
<dbReference type="Pfam" id="PF00528">
    <property type="entry name" value="BPD_transp_1"/>
    <property type="match status" value="1"/>
</dbReference>
<dbReference type="SUPFAM" id="SSF161098">
    <property type="entry name" value="MetI-like"/>
    <property type="match status" value="1"/>
</dbReference>
<dbReference type="PROSITE" id="PS50928">
    <property type="entry name" value="ABC_TM1"/>
    <property type="match status" value="1"/>
</dbReference>
<organism>
    <name type="scientific">Brucella abortus biovar 1 (strain 9-941)</name>
    <dbReference type="NCBI Taxonomy" id="262698"/>
    <lineage>
        <taxon>Bacteria</taxon>
        <taxon>Pseudomonadati</taxon>
        <taxon>Pseudomonadota</taxon>
        <taxon>Alphaproteobacteria</taxon>
        <taxon>Hyphomicrobiales</taxon>
        <taxon>Brucellaceae</taxon>
        <taxon>Brucella/Ochrobactrum group</taxon>
        <taxon>Brucella</taxon>
    </lineage>
</organism>
<feature type="chain" id="PRO_0000290131" description="sn-glycerol-3-phosphate transport system permease protein UgpA">
    <location>
        <begin position="1"/>
        <end position="293"/>
    </location>
</feature>
<feature type="transmembrane region" description="Helical" evidence="3">
    <location>
        <begin position="10"/>
        <end position="30"/>
    </location>
</feature>
<feature type="transmembrane region" description="Helical" evidence="3">
    <location>
        <begin position="72"/>
        <end position="92"/>
    </location>
</feature>
<feature type="transmembrane region" description="Helical" evidence="3">
    <location>
        <begin position="108"/>
        <end position="128"/>
    </location>
</feature>
<feature type="transmembrane region" description="Helical" evidence="3">
    <location>
        <begin position="155"/>
        <end position="177"/>
    </location>
</feature>
<feature type="transmembrane region" description="Helical" evidence="3">
    <location>
        <begin position="204"/>
        <end position="224"/>
    </location>
</feature>
<feature type="transmembrane region" description="Helical" evidence="3">
    <location>
        <begin position="261"/>
        <end position="281"/>
    </location>
</feature>
<feature type="domain" description="ABC transmembrane type-1" evidence="3">
    <location>
        <begin position="66"/>
        <end position="282"/>
    </location>
</feature>
<gene>
    <name type="primary">ugpA</name>
    <name type="ordered locus">BruAb2_0570</name>
</gene>
<accession>Q578E7</accession>
<protein>
    <recommendedName>
        <fullName evidence="1">sn-glycerol-3-phosphate transport system permease protein UgpA</fullName>
    </recommendedName>
</protein>
<proteinExistence type="inferred from homology"/>
<sequence length="293" mass="32383">MQKVTFPNKILPYFLLAPQIVLTVVFFFWPASQAIYQSFMREDAFGLKSTFVELANFTAVLSDPNYLHSVQVTVVFNVLTALLAMGVALLLATAADRVIRGQTFYRTLLIWPYAVAPAVAGMLWLFIFNPAMGTFAYLLRRNGIAWDPLLDGNQAMGLVVVAAAWKQISYNFLFFVAGLQAIPKSLIEAAAIDGARGARRFWTIVFPLLAPTSFFLLVVNTVYAFFDTFGIIHAVTGGGPAKATETLVYKVYNDGFVNLNLGSSSAQSVILMAIVIALTAFQFRFVEKRVHYS</sequence>
<evidence type="ECO:0000250" key="1">
    <source>
        <dbReference type="UniProtKB" id="P10905"/>
    </source>
</evidence>
<evidence type="ECO:0000255" key="2"/>
<evidence type="ECO:0000255" key="3">
    <source>
        <dbReference type="PROSITE-ProRule" id="PRU00441"/>
    </source>
</evidence>
<evidence type="ECO:0000305" key="4"/>
<keyword id="KW-0997">Cell inner membrane</keyword>
<keyword id="KW-1003">Cell membrane</keyword>
<keyword id="KW-0472">Membrane</keyword>
<keyword id="KW-0812">Transmembrane</keyword>
<keyword id="KW-1133">Transmembrane helix</keyword>
<keyword id="KW-0813">Transport</keyword>
<name>UGPA_BRUAB</name>